<keyword id="KW-0150">Chloroplast</keyword>
<keyword id="KW-0934">Plastid</keyword>
<keyword id="KW-0687">Ribonucleoprotein</keyword>
<keyword id="KW-0689">Ribosomal protein</keyword>
<keyword id="KW-0694">RNA-binding</keyword>
<keyword id="KW-0699">rRNA-binding</keyword>
<comment type="function">
    <text evidence="1">One of two assembly initiator proteins, it binds directly to the 5'-end of the 23S rRNA, where it nucleates assembly of the 50S subunit.</text>
</comment>
<comment type="subunit">
    <text evidence="1">Part of the 50S ribosomal subunit.</text>
</comment>
<comment type="subcellular location">
    <subcellularLocation>
        <location>Plastid</location>
        <location>Chloroplast</location>
    </subcellularLocation>
</comment>
<comment type="similarity">
    <text evidence="2">Belongs to the universal ribosomal protein uL24 family.</text>
</comment>
<proteinExistence type="inferred from homology"/>
<name>RK24_CYACA</name>
<sequence length="94" mass="10831">MINVRVINKKRRIQKYKVSVKSGDTIKVISGKYKNIVAKVLRVLKYSNEIIVKGVNIKIKHIKPVRDNEMGSLKSLEFPINISKVVLLESRKKE</sequence>
<geneLocation type="chloroplast"/>
<protein>
    <recommendedName>
        <fullName evidence="2">Large ribosomal subunit protein uL24c</fullName>
    </recommendedName>
    <alternativeName>
        <fullName>50S ribosomal protein L24, chloroplastic</fullName>
    </alternativeName>
</protein>
<feature type="chain" id="PRO_0000130759" description="Large ribosomal subunit protein uL24c">
    <location>
        <begin position="1"/>
        <end position="94"/>
    </location>
</feature>
<accession>Q9TLU3</accession>
<evidence type="ECO:0000250" key="1"/>
<evidence type="ECO:0000305" key="2"/>
<gene>
    <name type="primary">rpl24</name>
</gene>
<dbReference type="EMBL" id="AF022186">
    <property type="protein sequence ID" value="AAF12918.1"/>
    <property type="molecule type" value="Genomic_DNA"/>
</dbReference>
<dbReference type="RefSeq" id="NP_045176.1">
    <property type="nucleotide sequence ID" value="NC_001840.1"/>
</dbReference>
<dbReference type="SMR" id="Q9TLU3"/>
<dbReference type="GeneID" id="800304"/>
<dbReference type="GO" id="GO:0009507">
    <property type="term" value="C:chloroplast"/>
    <property type="evidence" value="ECO:0007669"/>
    <property type="project" value="UniProtKB-SubCell"/>
</dbReference>
<dbReference type="GO" id="GO:1990904">
    <property type="term" value="C:ribonucleoprotein complex"/>
    <property type="evidence" value="ECO:0007669"/>
    <property type="project" value="UniProtKB-KW"/>
</dbReference>
<dbReference type="GO" id="GO:0005840">
    <property type="term" value="C:ribosome"/>
    <property type="evidence" value="ECO:0007669"/>
    <property type="project" value="UniProtKB-KW"/>
</dbReference>
<dbReference type="GO" id="GO:0019843">
    <property type="term" value="F:rRNA binding"/>
    <property type="evidence" value="ECO:0007669"/>
    <property type="project" value="UniProtKB-UniRule"/>
</dbReference>
<dbReference type="GO" id="GO:0003735">
    <property type="term" value="F:structural constituent of ribosome"/>
    <property type="evidence" value="ECO:0007669"/>
    <property type="project" value="InterPro"/>
</dbReference>
<dbReference type="GO" id="GO:0006412">
    <property type="term" value="P:translation"/>
    <property type="evidence" value="ECO:0007669"/>
    <property type="project" value="UniProtKB-UniRule"/>
</dbReference>
<dbReference type="CDD" id="cd06089">
    <property type="entry name" value="KOW_RPL26"/>
    <property type="match status" value="1"/>
</dbReference>
<dbReference type="Gene3D" id="2.30.30.30">
    <property type="match status" value="1"/>
</dbReference>
<dbReference type="HAMAP" id="MF_01326_B">
    <property type="entry name" value="Ribosomal_uL24_B"/>
    <property type="match status" value="1"/>
</dbReference>
<dbReference type="InterPro" id="IPR005824">
    <property type="entry name" value="KOW"/>
</dbReference>
<dbReference type="InterPro" id="IPR014722">
    <property type="entry name" value="Rib_uL2_dom2"/>
</dbReference>
<dbReference type="InterPro" id="IPR003256">
    <property type="entry name" value="Ribosomal_uL24"/>
</dbReference>
<dbReference type="InterPro" id="IPR005825">
    <property type="entry name" value="Ribosomal_uL24_CS"/>
</dbReference>
<dbReference type="InterPro" id="IPR041988">
    <property type="entry name" value="Ribosomal_uL24_KOW"/>
</dbReference>
<dbReference type="InterPro" id="IPR008991">
    <property type="entry name" value="Translation_prot_SH3-like_sf"/>
</dbReference>
<dbReference type="NCBIfam" id="TIGR01079">
    <property type="entry name" value="rplX_bact"/>
    <property type="match status" value="1"/>
</dbReference>
<dbReference type="PANTHER" id="PTHR12903">
    <property type="entry name" value="MITOCHONDRIAL RIBOSOMAL PROTEIN L24"/>
    <property type="match status" value="1"/>
</dbReference>
<dbReference type="Pfam" id="PF00467">
    <property type="entry name" value="KOW"/>
    <property type="match status" value="1"/>
</dbReference>
<dbReference type="SMART" id="SM00739">
    <property type="entry name" value="KOW"/>
    <property type="match status" value="1"/>
</dbReference>
<dbReference type="SUPFAM" id="SSF50104">
    <property type="entry name" value="Translation proteins SH3-like domain"/>
    <property type="match status" value="1"/>
</dbReference>
<dbReference type="PROSITE" id="PS01108">
    <property type="entry name" value="RIBOSOMAL_L24"/>
    <property type="match status" value="1"/>
</dbReference>
<reference key="1">
    <citation type="journal article" date="2000" name="J. Mol. Evol.">
        <title>The structure and gene repertoire of an ancient red algal plastid genome.</title>
        <authorList>
            <person name="Gloeckner G."/>
            <person name="Rosenthal A."/>
            <person name="Valentin K.-U."/>
        </authorList>
    </citation>
    <scope>NUCLEOTIDE SEQUENCE [LARGE SCALE GENOMIC DNA]</scope>
    <source>
        <strain>RK-1</strain>
    </source>
</reference>
<organism>
    <name type="scientific">Cyanidium caldarium</name>
    <name type="common">Red alga</name>
    <dbReference type="NCBI Taxonomy" id="2771"/>
    <lineage>
        <taxon>Eukaryota</taxon>
        <taxon>Rhodophyta</taxon>
        <taxon>Bangiophyceae</taxon>
        <taxon>Cyanidiales</taxon>
        <taxon>Cyanidiaceae</taxon>
        <taxon>Cyanidium</taxon>
    </lineage>
</organism>